<gene>
    <name type="primary">gag-pol</name>
</gene>
<dbReference type="EC" id="3.4.23.16"/>
<dbReference type="EC" id="2.7.7.49"/>
<dbReference type="EC" id="2.7.7.7"/>
<dbReference type="EC" id="3.1.26.13"/>
<dbReference type="EC" id="3.1.13.2"/>
<dbReference type="EC" id="2.7.7.-" evidence="5"/>
<dbReference type="EC" id="3.1.-.-" evidence="5"/>
<dbReference type="EMBL" id="AF082394">
    <property type="protein sequence ID" value="AAD17757.1"/>
    <property type="status" value="ALT_SEQ"/>
    <property type="molecule type" value="Genomic_DNA"/>
</dbReference>
<dbReference type="SMR" id="Q9WC54"/>
<dbReference type="MEROPS" id="A02.001"/>
<dbReference type="PRO" id="PR:Q9WC54"/>
<dbReference type="Proteomes" id="UP000135310">
    <property type="component" value="Segment"/>
</dbReference>
<dbReference type="GO" id="GO:0043657">
    <property type="term" value="C:host cell"/>
    <property type="evidence" value="ECO:0007669"/>
    <property type="project" value="GOC"/>
</dbReference>
<dbReference type="GO" id="GO:0042025">
    <property type="term" value="C:host cell nucleus"/>
    <property type="evidence" value="ECO:0007669"/>
    <property type="project" value="UniProtKB-SubCell"/>
</dbReference>
<dbReference type="GO" id="GO:0020002">
    <property type="term" value="C:host cell plasma membrane"/>
    <property type="evidence" value="ECO:0007669"/>
    <property type="project" value="UniProtKB-SubCell"/>
</dbReference>
<dbReference type="GO" id="GO:0072494">
    <property type="term" value="C:host multivesicular body"/>
    <property type="evidence" value="ECO:0007669"/>
    <property type="project" value="UniProtKB-SubCell"/>
</dbReference>
<dbReference type="GO" id="GO:0016020">
    <property type="term" value="C:membrane"/>
    <property type="evidence" value="ECO:0007669"/>
    <property type="project" value="UniProtKB-KW"/>
</dbReference>
<dbReference type="GO" id="GO:0019013">
    <property type="term" value="C:viral nucleocapsid"/>
    <property type="evidence" value="ECO:0007669"/>
    <property type="project" value="UniProtKB-KW"/>
</dbReference>
<dbReference type="GO" id="GO:0055036">
    <property type="term" value="C:virion membrane"/>
    <property type="evidence" value="ECO:0007669"/>
    <property type="project" value="UniProtKB-SubCell"/>
</dbReference>
<dbReference type="GO" id="GO:0004190">
    <property type="term" value="F:aspartic-type endopeptidase activity"/>
    <property type="evidence" value="ECO:0007669"/>
    <property type="project" value="UniProtKB-KW"/>
</dbReference>
<dbReference type="GO" id="GO:0003677">
    <property type="term" value="F:DNA binding"/>
    <property type="evidence" value="ECO:0007669"/>
    <property type="project" value="UniProtKB-KW"/>
</dbReference>
<dbReference type="GO" id="GO:0003887">
    <property type="term" value="F:DNA-directed DNA polymerase activity"/>
    <property type="evidence" value="ECO:0007669"/>
    <property type="project" value="UniProtKB-KW"/>
</dbReference>
<dbReference type="GO" id="GO:0004533">
    <property type="term" value="F:exoribonuclease H activity"/>
    <property type="evidence" value="ECO:0007669"/>
    <property type="project" value="UniProtKB-EC"/>
</dbReference>
<dbReference type="GO" id="GO:0008289">
    <property type="term" value="F:lipid binding"/>
    <property type="evidence" value="ECO:0007669"/>
    <property type="project" value="UniProtKB-KW"/>
</dbReference>
<dbReference type="GO" id="GO:0035613">
    <property type="term" value="F:RNA stem-loop binding"/>
    <property type="evidence" value="ECO:0007669"/>
    <property type="project" value="TreeGrafter"/>
</dbReference>
<dbReference type="GO" id="GO:0003964">
    <property type="term" value="F:RNA-directed DNA polymerase activity"/>
    <property type="evidence" value="ECO:0007669"/>
    <property type="project" value="UniProtKB-KW"/>
</dbReference>
<dbReference type="GO" id="GO:0004523">
    <property type="term" value="F:RNA-DNA hybrid ribonuclease activity"/>
    <property type="evidence" value="ECO:0007669"/>
    <property type="project" value="InterPro"/>
</dbReference>
<dbReference type="GO" id="GO:0005198">
    <property type="term" value="F:structural molecule activity"/>
    <property type="evidence" value="ECO:0007669"/>
    <property type="project" value="InterPro"/>
</dbReference>
<dbReference type="GO" id="GO:0008270">
    <property type="term" value="F:zinc ion binding"/>
    <property type="evidence" value="ECO:0007669"/>
    <property type="project" value="UniProtKB-KW"/>
</dbReference>
<dbReference type="GO" id="GO:0015074">
    <property type="term" value="P:DNA integration"/>
    <property type="evidence" value="ECO:0007669"/>
    <property type="project" value="UniProtKB-KW"/>
</dbReference>
<dbReference type="GO" id="GO:0006310">
    <property type="term" value="P:DNA recombination"/>
    <property type="evidence" value="ECO:0007669"/>
    <property type="project" value="UniProtKB-KW"/>
</dbReference>
<dbReference type="GO" id="GO:0075713">
    <property type="term" value="P:establishment of integrated proviral latency"/>
    <property type="evidence" value="ECO:0007669"/>
    <property type="project" value="UniProtKB-KW"/>
</dbReference>
<dbReference type="GO" id="GO:0006508">
    <property type="term" value="P:proteolysis"/>
    <property type="evidence" value="ECO:0007669"/>
    <property type="project" value="UniProtKB-KW"/>
</dbReference>
<dbReference type="GO" id="GO:0046718">
    <property type="term" value="P:symbiont entry into host cell"/>
    <property type="evidence" value="ECO:0007669"/>
    <property type="project" value="UniProtKB-KW"/>
</dbReference>
<dbReference type="GO" id="GO:0052151">
    <property type="term" value="P:symbiont-mediated activation of host apoptosis"/>
    <property type="evidence" value="ECO:0007669"/>
    <property type="project" value="UniProtKB-KW"/>
</dbReference>
<dbReference type="GO" id="GO:0039657">
    <property type="term" value="P:symbiont-mediated suppression of host gene expression"/>
    <property type="evidence" value="ECO:0007669"/>
    <property type="project" value="UniProtKB-KW"/>
</dbReference>
<dbReference type="GO" id="GO:0044826">
    <property type="term" value="P:viral genome integration into host DNA"/>
    <property type="evidence" value="ECO:0007669"/>
    <property type="project" value="UniProtKB-KW"/>
</dbReference>
<dbReference type="GO" id="GO:0075732">
    <property type="term" value="P:viral penetration into host nucleus"/>
    <property type="evidence" value="ECO:0007669"/>
    <property type="project" value="UniProtKB-KW"/>
</dbReference>
<dbReference type="GO" id="GO:0075523">
    <property type="term" value="P:viral translational frameshifting"/>
    <property type="evidence" value="ECO:0007669"/>
    <property type="project" value="UniProtKB-KW"/>
</dbReference>
<dbReference type="CDD" id="cd05482">
    <property type="entry name" value="HIV_retropepsin_like"/>
    <property type="match status" value="1"/>
</dbReference>
<dbReference type="CDD" id="cd01645">
    <property type="entry name" value="RT_Rtv"/>
    <property type="match status" value="1"/>
</dbReference>
<dbReference type="FunFam" id="1.10.1200.30:FF:000001">
    <property type="entry name" value="Gag polyprotein"/>
    <property type="match status" value="1"/>
</dbReference>
<dbReference type="FunFam" id="1.10.375.10:FF:000001">
    <property type="entry name" value="Gag polyprotein"/>
    <property type="match status" value="1"/>
</dbReference>
<dbReference type="FunFam" id="4.10.60.10:FF:000001">
    <property type="entry name" value="Gag polyprotein"/>
    <property type="match status" value="1"/>
</dbReference>
<dbReference type="FunFam" id="3.30.420.10:FF:000025">
    <property type="entry name" value="Gag-Pol polyprotein"/>
    <property type="match status" value="1"/>
</dbReference>
<dbReference type="FunFam" id="3.30.70.270:FF:000006">
    <property type="entry name" value="Gag-Pol polyprotein"/>
    <property type="match status" value="1"/>
</dbReference>
<dbReference type="FunFam" id="3.30.420.10:FF:000017">
    <property type="entry name" value="POL polyprotein"/>
    <property type="match status" value="1"/>
</dbReference>
<dbReference type="Gene3D" id="1.10.10.200">
    <property type="match status" value="1"/>
</dbReference>
<dbReference type="Gene3D" id="1.10.1200.30">
    <property type="match status" value="1"/>
</dbReference>
<dbReference type="Gene3D" id="3.30.70.270">
    <property type="match status" value="3"/>
</dbReference>
<dbReference type="Gene3D" id="2.40.70.10">
    <property type="entry name" value="Acid Proteases"/>
    <property type="match status" value="1"/>
</dbReference>
<dbReference type="Gene3D" id="3.10.10.10">
    <property type="entry name" value="HIV Type 1 Reverse Transcriptase, subunit A, domain 1"/>
    <property type="match status" value="1"/>
</dbReference>
<dbReference type="Gene3D" id="1.10.375.10">
    <property type="entry name" value="Human Immunodeficiency Virus Type 1 Capsid Protein"/>
    <property type="match status" value="1"/>
</dbReference>
<dbReference type="Gene3D" id="1.10.150.90">
    <property type="entry name" value="Immunodeficiency lentiviruses, gag gene matrix protein p17"/>
    <property type="match status" value="1"/>
</dbReference>
<dbReference type="Gene3D" id="2.30.30.10">
    <property type="entry name" value="Integrase, C-terminal domain superfamily, retroviral"/>
    <property type="match status" value="1"/>
</dbReference>
<dbReference type="Gene3D" id="3.30.420.10">
    <property type="entry name" value="Ribonuclease H-like superfamily/Ribonuclease H"/>
    <property type="match status" value="2"/>
</dbReference>
<dbReference type="Gene3D" id="1.20.5.760">
    <property type="entry name" value="Single helix bin"/>
    <property type="match status" value="1"/>
</dbReference>
<dbReference type="Gene3D" id="4.10.60.10">
    <property type="entry name" value="Zinc finger, CCHC-type"/>
    <property type="match status" value="1"/>
</dbReference>
<dbReference type="InterPro" id="IPR001969">
    <property type="entry name" value="Aspartic_peptidase_AS"/>
</dbReference>
<dbReference type="InterPro" id="IPR043502">
    <property type="entry name" value="DNA/RNA_pol_sf"/>
</dbReference>
<dbReference type="InterPro" id="IPR045345">
    <property type="entry name" value="Gag_p24_C"/>
</dbReference>
<dbReference type="InterPro" id="IPR017856">
    <property type="entry name" value="Integrase-like_N"/>
</dbReference>
<dbReference type="InterPro" id="IPR036862">
    <property type="entry name" value="Integrase_C_dom_sf_retrovir"/>
</dbReference>
<dbReference type="InterPro" id="IPR001037">
    <property type="entry name" value="Integrase_C_retrovir"/>
</dbReference>
<dbReference type="InterPro" id="IPR001584">
    <property type="entry name" value="Integrase_cat-core"/>
</dbReference>
<dbReference type="InterPro" id="IPR003308">
    <property type="entry name" value="Integrase_Zn-bd_dom_N"/>
</dbReference>
<dbReference type="InterPro" id="IPR000071">
    <property type="entry name" value="Lentvrl_matrix_N"/>
</dbReference>
<dbReference type="InterPro" id="IPR012344">
    <property type="entry name" value="Matrix_HIV/RSV_N"/>
</dbReference>
<dbReference type="InterPro" id="IPR001995">
    <property type="entry name" value="Peptidase_A2_cat"/>
</dbReference>
<dbReference type="InterPro" id="IPR021109">
    <property type="entry name" value="Peptidase_aspartic_dom_sf"/>
</dbReference>
<dbReference type="InterPro" id="IPR034170">
    <property type="entry name" value="Retropepsin-like_cat_dom"/>
</dbReference>
<dbReference type="InterPro" id="IPR018061">
    <property type="entry name" value="Retropepsins"/>
</dbReference>
<dbReference type="InterPro" id="IPR008916">
    <property type="entry name" value="Retrov_capsid_C"/>
</dbReference>
<dbReference type="InterPro" id="IPR008919">
    <property type="entry name" value="Retrov_capsid_N"/>
</dbReference>
<dbReference type="InterPro" id="IPR010999">
    <property type="entry name" value="Retrovr_matrix"/>
</dbReference>
<dbReference type="InterPro" id="IPR043128">
    <property type="entry name" value="Rev_trsase/Diguanyl_cyclase"/>
</dbReference>
<dbReference type="InterPro" id="IPR012337">
    <property type="entry name" value="RNaseH-like_sf"/>
</dbReference>
<dbReference type="InterPro" id="IPR002156">
    <property type="entry name" value="RNaseH_domain"/>
</dbReference>
<dbReference type="InterPro" id="IPR036397">
    <property type="entry name" value="RNaseH_sf"/>
</dbReference>
<dbReference type="InterPro" id="IPR000477">
    <property type="entry name" value="RT_dom"/>
</dbReference>
<dbReference type="InterPro" id="IPR010659">
    <property type="entry name" value="RVT_connect"/>
</dbReference>
<dbReference type="InterPro" id="IPR010661">
    <property type="entry name" value="RVT_thumb"/>
</dbReference>
<dbReference type="InterPro" id="IPR001878">
    <property type="entry name" value="Znf_CCHC"/>
</dbReference>
<dbReference type="InterPro" id="IPR036875">
    <property type="entry name" value="Znf_CCHC_sf"/>
</dbReference>
<dbReference type="PANTHER" id="PTHR41694">
    <property type="entry name" value="ENDOGENOUS RETROVIRUS GROUP K MEMBER POL PROTEIN"/>
    <property type="match status" value="1"/>
</dbReference>
<dbReference type="PANTHER" id="PTHR41694:SF3">
    <property type="entry name" value="RNA-DIRECTED DNA POLYMERASE-RELATED"/>
    <property type="match status" value="1"/>
</dbReference>
<dbReference type="Pfam" id="PF00540">
    <property type="entry name" value="Gag_p17"/>
    <property type="match status" value="1"/>
</dbReference>
<dbReference type="Pfam" id="PF19317">
    <property type="entry name" value="Gag_p24_C"/>
    <property type="match status" value="1"/>
</dbReference>
<dbReference type="Pfam" id="PF00552">
    <property type="entry name" value="IN_DBD_C"/>
    <property type="match status" value="1"/>
</dbReference>
<dbReference type="Pfam" id="PF02022">
    <property type="entry name" value="Integrase_Zn"/>
    <property type="match status" value="1"/>
</dbReference>
<dbReference type="Pfam" id="PF00075">
    <property type="entry name" value="RNase_H"/>
    <property type="match status" value="1"/>
</dbReference>
<dbReference type="Pfam" id="PF00665">
    <property type="entry name" value="rve"/>
    <property type="match status" value="1"/>
</dbReference>
<dbReference type="Pfam" id="PF00077">
    <property type="entry name" value="RVP"/>
    <property type="match status" value="1"/>
</dbReference>
<dbReference type="Pfam" id="PF00078">
    <property type="entry name" value="RVT_1"/>
    <property type="match status" value="1"/>
</dbReference>
<dbReference type="Pfam" id="PF06815">
    <property type="entry name" value="RVT_connect"/>
    <property type="match status" value="1"/>
</dbReference>
<dbReference type="Pfam" id="PF06817">
    <property type="entry name" value="RVT_thumb"/>
    <property type="match status" value="1"/>
</dbReference>
<dbReference type="Pfam" id="PF00098">
    <property type="entry name" value="zf-CCHC"/>
    <property type="match status" value="2"/>
</dbReference>
<dbReference type="PRINTS" id="PR00234">
    <property type="entry name" value="HIV1MATRIX"/>
</dbReference>
<dbReference type="SMART" id="SM00343">
    <property type="entry name" value="ZnF_C2HC"/>
    <property type="match status" value="2"/>
</dbReference>
<dbReference type="SUPFAM" id="SSF50630">
    <property type="entry name" value="Acid proteases"/>
    <property type="match status" value="1"/>
</dbReference>
<dbReference type="SUPFAM" id="SSF50122">
    <property type="entry name" value="DNA-binding domain of retroviral integrase"/>
    <property type="match status" value="1"/>
</dbReference>
<dbReference type="SUPFAM" id="SSF56672">
    <property type="entry name" value="DNA/RNA polymerases"/>
    <property type="match status" value="1"/>
</dbReference>
<dbReference type="SUPFAM" id="SSF46919">
    <property type="entry name" value="N-terminal Zn binding domain of HIV integrase"/>
    <property type="match status" value="1"/>
</dbReference>
<dbReference type="SUPFAM" id="SSF47836">
    <property type="entry name" value="Retroviral matrix proteins"/>
    <property type="match status" value="1"/>
</dbReference>
<dbReference type="SUPFAM" id="SSF47353">
    <property type="entry name" value="Retrovirus capsid dimerization domain-like"/>
    <property type="match status" value="1"/>
</dbReference>
<dbReference type="SUPFAM" id="SSF47943">
    <property type="entry name" value="Retrovirus capsid protein, N-terminal core domain"/>
    <property type="match status" value="1"/>
</dbReference>
<dbReference type="SUPFAM" id="SSF57756">
    <property type="entry name" value="Retrovirus zinc finger-like domains"/>
    <property type="match status" value="1"/>
</dbReference>
<dbReference type="SUPFAM" id="SSF53098">
    <property type="entry name" value="Ribonuclease H-like"/>
    <property type="match status" value="2"/>
</dbReference>
<dbReference type="PROSITE" id="PS50175">
    <property type="entry name" value="ASP_PROT_RETROV"/>
    <property type="match status" value="1"/>
</dbReference>
<dbReference type="PROSITE" id="PS00141">
    <property type="entry name" value="ASP_PROTEASE"/>
    <property type="match status" value="1"/>
</dbReference>
<dbReference type="PROSITE" id="PS50994">
    <property type="entry name" value="INTEGRASE"/>
    <property type="match status" value="1"/>
</dbReference>
<dbReference type="PROSITE" id="PS51027">
    <property type="entry name" value="INTEGRASE_DBD"/>
    <property type="match status" value="1"/>
</dbReference>
<dbReference type="PROSITE" id="PS50879">
    <property type="entry name" value="RNASE_H_1"/>
    <property type="match status" value="1"/>
</dbReference>
<dbReference type="PROSITE" id="PS50878">
    <property type="entry name" value="RT_POL"/>
    <property type="match status" value="1"/>
</dbReference>
<dbReference type="PROSITE" id="PS50158">
    <property type="entry name" value="ZF_CCHC"/>
    <property type="match status" value="2"/>
</dbReference>
<dbReference type="PROSITE" id="PS50876">
    <property type="entry name" value="ZF_INTEGRASE"/>
    <property type="match status" value="1"/>
</dbReference>
<keyword id="KW-1073">Activation of host caspases by virus</keyword>
<keyword id="KW-0014">AIDS</keyword>
<keyword id="KW-0064">Aspartyl protease</keyword>
<keyword id="KW-0167">Capsid protein</keyword>
<keyword id="KW-0229">DNA integration</keyword>
<keyword id="KW-0233">DNA recombination</keyword>
<keyword id="KW-0238">DNA-binding</keyword>
<keyword id="KW-0239">DNA-directed DNA polymerase</keyword>
<keyword id="KW-0255">Endonuclease</keyword>
<keyword id="KW-1262">Eukaryotic host gene expression shutoff by virus</keyword>
<keyword id="KW-1193">Eukaryotic host translation shutoff by virus</keyword>
<keyword id="KW-1032">Host cell membrane</keyword>
<keyword id="KW-1035">Host cytoplasm</keyword>
<keyword id="KW-1039">Host endosome</keyword>
<keyword id="KW-1190">Host gene expression shutoff by virus</keyword>
<keyword id="KW-1043">Host membrane</keyword>
<keyword id="KW-1048">Host nucleus</keyword>
<keyword id="KW-0945">Host-virus interaction</keyword>
<keyword id="KW-0378">Hydrolase</keyword>
<keyword id="KW-0446">Lipid-binding</keyword>
<keyword id="KW-0449">Lipoprotein</keyword>
<keyword id="KW-0460">Magnesium</keyword>
<keyword id="KW-0472">Membrane</keyword>
<keyword id="KW-0479">Metal-binding</keyword>
<keyword id="KW-1119">Modulation of host cell apoptosis by virus</keyword>
<keyword id="KW-0511">Multifunctional enzyme</keyword>
<keyword id="KW-0519">Myristate</keyword>
<keyword id="KW-0540">Nuclease</keyword>
<keyword id="KW-0548">Nucleotidyltransferase</keyword>
<keyword id="KW-0597">Phosphoprotein</keyword>
<keyword id="KW-0645">Protease</keyword>
<keyword id="KW-0677">Repeat</keyword>
<keyword id="KW-0688">Ribosomal frameshifting</keyword>
<keyword id="KW-0694">RNA-binding</keyword>
<keyword id="KW-0695">RNA-directed DNA polymerase</keyword>
<keyword id="KW-0808">Transferase</keyword>
<keyword id="KW-1179">Viral genome integration</keyword>
<keyword id="KW-0543">Viral nucleoprotein</keyword>
<keyword id="KW-1163">Viral penetration into host nucleus</keyword>
<keyword id="KW-1188">Viral release from host cell</keyword>
<keyword id="KW-0946">Virion</keyword>
<keyword id="KW-0917">Virion maturation</keyword>
<keyword id="KW-1160">Virus entry into host cell</keyword>
<keyword id="KW-0862">Zinc</keyword>
<keyword id="KW-0863">Zinc-finger</keyword>
<name>POL_HV1S2</name>
<comment type="function">
    <molecule>Gag-Pol polyprotein</molecule>
    <text evidence="1">Mediates, with Gag polyprotein, the essential events in virion assembly, including binding the plasma membrane, making the protein-protein interactions necessary to create spherical particles, recruiting the viral Env proteins, and packaging the genomic RNA via direct interactions with the RNA packaging sequence (Psi). Gag-Pol polyprotein may regulate its own translation, by the binding genomic RNA in the 5'-UTR. At low concentration, the polyprotein would promote translation, whereas at high concentration, the polyprotein would encapsidate genomic RNA and then shut off translation.</text>
</comment>
<comment type="function">
    <molecule>Matrix protein p17</molecule>
    <text evidence="7">Targets the polyprotein to the plasma membrane via a multipartite membrane-binding signal, that includes its myristoylated N-terminus. Matrix protein is part of the pre-integration complex. Implicated in the release from host cell mediated by Vpu. Binds to RNA.</text>
</comment>
<comment type="function">
    <molecule>Capsid protein p24</molecule>
    <text evidence="5 7">Forms the conical core that encapsulates the genomic RNA-nucleocapsid complex in the virion. Most core are conical, with only 7% tubular. The core is constituted by capsid protein hexamer subunits. The core is disassembled soon after virion entry (By similarity). Host restriction factors such as TRIM5-alpha or TRIMCyp bind retroviral capsids and cause premature capsid disassembly, leading to blocks in reverse transcription. Capsid restriction by TRIM5 is one of the factors which restricts HIV-1 to the human species. Host PIN1 apparently facilitates the virion uncoating. On the other hand, interactions with PDZD8 or CYPA stabilize the capsid.</text>
</comment>
<comment type="function">
    <molecule>Nucleocapsid protein p7</molecule>
    <text evidence="5">Encapsulates and protects viral dimeric unspliced genomic RNA (gRNA). Binds these RNAs through its zinc fingers. Acts as a nucleic acid chaperone which is involved in rearangement of nucleic acid secondary structure during gRNA retrotranscription. Also facilitates template switch leading to recombination. As part of the polyprotein, participates in gRNA dimerization, packaging, tRNA incorporation and virion assembly.</text>
</comment>
<comment type="function">
    <molecule>Protease</molecule>
    <text evidence="5 10">Aspartyl protease that mediates proteolytic cleavages of Gag and Gag-Pol polyproteins during or shortly after the release of the virion from the plasma membrane. Cleavages take place as an ordered, step-wise cascade to yield mature proteins. This process is called maturation. Displays maximal activity during the budding process just prior to particle release from the cell. Also cleaves Nef and Vif, probably concomitantly with viral structural proteins on maturation of virus particles. Hydrolyzes host EIF4GI and PABP1 in order to shut off the capped cellular mRNA translation. The resulting inhibition of cellular protein synthesis serves to ensure maximal viral gene expression and to evade host immune response. Also mediates cleavage of host YTHDF3. Mediates cleavage of host CARD8, thereby activating the CARD8 inflammasome, leading to the clearance of latent HIV-1 in patient CD4(+) T-cells after viral reactivation; in contrast, HIV-1 can evade CARD8-sensing when its protease remains inactive in infected cells prior to viral budding (By similarity).</text>
</comment>
<comment type="function">
    <molecule>Reverse transcriptase/ribonuclease H</molecule>
    <text evidence="5">Multifunctional enzyme that converts the viral RNA genome into dsDNA in the cytoplasm, shortly after virus entry into the cell. This enzyme displays a DNA polymerase activity that can copy either DNA or RNA templates, and a ribonuclease H (RNase H) activity that cleaves the RNA strand of RNA-DNA heteroduplexes in a partially processive 3' to 5' endonucleasic mode. Conversion of viral genomic RNA into dsDNA requires many steps. A tRNA(3)-Lys binds to the primer-binding site (PBS) situated at the 5'-end of the viral RNA. RT uses the 3' end of the tRNA primer to perform a short round of RNA-dependent minus-strand DNA synthesis. The reading proceeds through the U5 region and ends after the repeated (R) region which is present at both ends of viral RNA. The portion of the RNA-DNA heteroduplex is digested by the RNase H, resulting in a ssDNA product attached to the tRNA primer. This ssDNA/tRNA hybridizes with the identical R region situated at the 3' end of viral RNA. This template exchange, known as minus-strand DNA strong stop transfer, can be either intra- or intermolecular. RT uses the 3' end of this newly synthesized short ssDNA to perform the RNA-dependent minus-strand DNA synthesis of the whole template. RNase H digests the RNA template except for two polypurine tracts (PPTs) situated at the 5'-end and near the center of the genome. It is not clear if both polymerase and RNase H activities are simultaneous. RNase H probably can proceed both in a polymerase-dependent (RNA cut into small fragments by the same RT performing DNA synthesis) and a polymerase-independent mode (cleavage of remaining RNA fragments by free RTs). Secondly, RT performs DNA-directed plus-strand DNA synthesis using the PPTs that have not been removed by RNase H as primers. PPTs and tRNA primers are then removed by RNase H. The 3' and 5' ssDNA PBS regions hybridize to form a circular dsDNA intermediate. Strand displacement synthesis by RT to the PBS and PPT ends produces a blunt ended, linear dsDNA copy of the viral genome that includes long terminal repeats (LTRs) at both ends.</text>
</comment>
<comment type="function">
    <molecule>Integrase</molecule>
    <text evidence="5">Catalyzes viral DNA integration into the host chromosome, by performing a series of DNA cutting and joining reactions. This enzyme activity takes place after virion entry into a cell and reverse transcription of the RNA genome in dsDNA. The first step in the integration process is 3' processing. This step requires a complex comprising the viral genome, matrix protein, Vpr and integrase. This complex is called the pre-integration complex (PIC). The integrase protein removes 2 nucleotides from each 3' end of the viral DNA, leaving recessed CA OH's at the 3' ends. In the second step, the PIC enters cell nucleus. This process is mediated through integrase and Vpr proteins, and allows the virus to infect a non dividing cell. This ability to enter the nucleus is specific of lentiviruses, other retroviruses cannot and rely on cell division to access cell chromosomes. In the third step, termed strand transfer, the integrase protein joins the previously processed 3' ends to the 5' ends of strands of target cellular DNA at the site of integration. The 5'-ends are produced by integrase-catalyzed staggered cuts, 5 bp apart. A Y-shaped, gapped, recombination intermediate results, with the 5'-ends of the viral DNA strands and the 3' ends of target DNA strands remaining unjoined, flanking a gap of 5 bp. The last step is viral DNA integration into host chromosome. This involves host DNA repair synthesis in which the 5 bp gaps between the unjoined strands are filled in and then ligated. Since this process occurs at both cuts flanking the HIV genome, a 5 bp duplication of host DNA is produced at the ends of HIV-1 integration. Alternatively, Integrase may catalyze the excision of viral DNA just after strand transfer, this is termed disintegration.</text>
</comment>
<comment type="catalytic activity">
    <reaction evidence="10">
        <text>Specific for a P1 residue that is hydrophobic, and P1' variable, but often Pro.</text>
        <dbReference type="EC" id="3.4.23.16"/>
    </reaction>
</comment>
<comment type="catalytic activity">
    <reaction evidence="1">
        <text>Endohydrolysis of RNA in RNA/DNA hybrids. Three different cleavage modes: 1. sequence-specific internal cleavage of RNA. Human immunodeficiency virus type 1 and Moloney murine leukemia virus enzymes prefer to cleave the RNA strand one nucleotide away from the RNA-DNA junction. 2. RNA 5'-end directed cleavage 13-19 nucleotides from the RNA end. 3. DNA 3'-end directed cleavage 15-20 nucleotides away from the primer terminus.</text>
        <dbReference type="EC" id="3.1.26.13"/>
    </reaction>
</comment>
<comment type="catalytic activity">
    <reaction evidence="1">
        <text>3'-end directed exonucleolytic cleavage of viral RNA-DNA hybrid.</text>
        <dbReference type="EC" id="3.1.13.2"/>
    </reaction>
</comment>
<comment type="catalytic activity">
    <reaction evidence="11">
        <text>DNA(n) + a 2'-deoxyribonucleoside 5'-triphosphate = DNA(n+1) + diphosphate</text>
        <dbReference type="Rhea" id="RHEA:22508"/>
        <dbReference type="Rhea" id="RHEA-COMP:17339"/>
        <dbReference type="Rhea" id="RHEA-COMP:17340"/>
        <dbReference type="ChEBI" id="CHEBI:33019"/>
        <dbReference type="ChEBI" id="CHEBI:61560"/>
        <dbReference type="ChEBI" id="CHEBI:173112"/>
        <dbReference type="EC" id="2.7.7.49"/>
    </reaction>
</comment>
<comment type="catalytic activity">
    <reaction evidence="11">
        <text>DNA(n) + a 2'-deoxyribonucleoside 5'-triphosphate = DNA(n+1) + diphosphate</text>
        <dbReference type="Rhea" id="RHEA:22508"/>
        <dbReference type="Rhea" id="RHEA-COMP:17339"/>
        <dbReference type="Rhea" id="RHEA-COMP:17340"/>
        <dbReference type="ChEBI" id="CHEBI:33019"/>
        <dbReference type="ChEBI" id="CHEBI:61560"/>
        <dbReference type="ChEBI" id="CHEBI:173112"/>
        <dbReference type="EC" id="2.7.7.7"/>
    </reaction>
</comment>
<comment type="cofactor">
    <cofactor evidence="1">
        <name>Mg(2+)</name>
        <dbReference type="ChEBI" id="CHEBI:18420"/>
    </cofactor>
    <text evidence="1">Binds 2 magnesium ions for reverse transcriptase polymerase activity.</text>
</comment>
<comment type="cofactor">
    <cofactor evidence="1">
        <name>Mg(2+)</name>
        <dbReference type="ChEBI" id="CHEBI:18420"/>
    </cofactor>
    <text evidence="1">Binds 2 magnesium ions for ribonuclease H (RNase H) activity. Substrate-binding is a precondition for magnesium binding.</text>
</comment>
<comment type="cofactor">
    <cofactor evidence="1">
        <name>Mg(2+)</name>
        <dbReference type="ChEBI" id="CHEBI:18420"/>
    </cofactor>
    <text evidence="1">Magnesium ions are required for integrase activity. Binds at least 1, maybe 2 magnesium ions.</text>
</comment>
<comment type="activity regulation">
    <text evidence="1">Protease: The viral protease is inhibited by many synthetic protease inhibitors (PIs), such as amprenavir, atazanavir, indinavir, loprinavir, nelfinavir, ritonavir and saquinavir. Use of protease inhibitors in tritherapy regimens permit more ambitious therapeutic strategies. Reverse transcriptase/ribonuclease H: RT can be inhibited either by nucleoside RT inhibitors (NRTIs) or by non nucleoside RT inhibitors (NNRTIs). NRTIs act as chain terminators, whereas NNRTIs inhibit DNA polymerization by binding a small hydrophobic pocket near the RT active site and inducing an allosteric change in this region. Classical NRTIs are abacavir, adefovir (PMEA), didanosine (ddI), lamivudine (3TC), stavudine (d4T), tenofovir (PMPA), zalcitabine (ddC), and zidovudine (AZT). Classical NNRTIs are atevirdine (BHAP U-87201E), delavirdine, efavirenz (DMP-266), emivirine (I-EBU), and nevirapine (BI-RG-587). The tritherapies used as a basic effective treatment of AIDS associate two NRTIs and one NNRTI.</text>
</comment>
<comment type="subunit">
    <molecule>Matrix protein p17</molecule>
    <text evidence="5 7">Homotrimer; further assembles as hexamers of trimers (By similarity). Interacts with gp41 (via C-terminus) (By similarity). Interacts with host CALM1; this interaction induces a conformational change in the Matrix protein, triggering exposure of the myristate group (By similarity). Interacts with host AP3D1; this interaction allows the polyprotein trafficking to multivesicular bodies during virus assembly (By similarity). Part of the pre-integration complex (PIC) which is composed of viral genome, matrix protein, Vpr and integrase (By similarity).</text>
</comment>
<comment type="subunit">
    <molecule>Capsid protein p24</molecule>
    <text evidence="5 7">Homodimer; the homodimer further multimerizes as homohexamers or homopentamers. Interacts with human PPIA/CYPA (By similarity); This interaction stabilizes the capsid. Interacts with human NUP153 (By similarity). Interacts with host PDZD8; this interaction stabilizes the capsid (By similarity). Interacts with monkey TRIM5; this interaction destabilizes the capsid (By similarity).</text>
</comment>
<comment type="subunit">
    <molecule>Protease</molecule>
    <text evidence="5 7">Homodimer, whose active site consists of two apposed aspartic acid residues.</text>
</comment>
<comment type="subunit">
    <molecule>Reverse transcriptase/ribonuclease H</molecule>
    <text evidence="3">Heterodimer of p66 RT and p51 RT (RT p66/p51) (By similarity). Heterodimerization of RT is essential for DNA polymerase activity (By similarity). The overall folding of the subdomains is similar in p66 RT and p51 RT but the spatial arrangements of the subdomains are dramatically different (By similarity).</text>
</comment>
<comment type="subunit">
    <molecule>Integrase</molecule>
    <text evidence="4 5 7">Homotetramer; may further associate as a homohexadecamer (By similarity). Part of the pre-integration complex (PIC) which is composed of viral genome, matrix protein, Vpr and integrase. Interacts with human SMARCB1/INI1 and human PSIP1/LEDGF isoform 1. Interacts with human KPNA3; this interaction might play a role in nuclear import of the pre-integration complex (By similarity). Interacts with human NUP153; this interaction might play a role in nuclear import of the pre-integration complex (By similarity).</text>
</comment>
<comment type="subcellular location">
    <molecule>Gag-Pol polyprotein</molecule>
    <subcellularLocation>
        <location>Host cell membrane</location>
        <topology>Lipid-anchor</topology>
    </subcellularLocation>
    <subcellularLocation>
        <location>Host endosome</location>
        <location>Host multivesicular body</location>
    </subcellularLocation>
    <text evidence="7">These locations are linked to virus assembly sites. The main location is the cell membrane, but under some circumstances, late endosomal compartments can serve as productive sites for virion assembly.</text>
</comment>
<comment type="subcellular location">
    <molecule>Matrix protein p17</molecule>
    <subcellularLocation>
        <location>Virion membrane</location>
        <topology evidence="18">Lipid-anchor</topology>
    </subcellularLocation>
    <subcellularLocation>
        <location evidence="1">Host nucleus</location>
    </subcellularLocation>
    <subcellularLocation>
        <location evidence="1">Host cytoplasm</location>
    </subcellularLocation>
</comment>
<comment type="subcellular location">
    <molecule>Capsid protein p24</molecule>
    <subcellularLocation>
        <location evidence="18">Virion</location>
    </subcellularLocation>
</comment>
<comment type="subcellular location">
    <molecule>Nucleocapsid protein p7</molecule>
    <subcellularLocation>
        <location evidence="18">Virion</location>
    </subcellularLocation>
</comment>
<comment type="subcellular location">
    <molecule>Reverse transcriptase/ribonuclease H</molecule>
    <subcellularLocation>
        <location evidence="18">Virion</location>
    </subcellularLocation>
</comment>
<comment type="subcellular location">
    <molecule>Integrase</molecule>
    <subcellularLocation>
        <location evidence="18">Virion</location>
    </subcellularLocation>
    <subcellularLocation>
        <location evidence="18">Host nucleus</location>
    </subcellularLocation>
    <subcellularLocation>
        <location evidence="18">Host cytoplasm</location>
    </subcellularLocation>
    <text evidence="18">Nuclear at initial phase, cytoplasmic at assembly.</text>
</comment>
<comment type="alternative products">
    <event type="ribosomal frameshifting"/>
    <isoform>
        <id>Q9WC54-1</id>
        <name>Gag-Pol polyprotein</name>
        <sequence type="displayed"/>
    </isoform>
    <isoform>
        <id>Q9WC53-1</id>
        <name>Gag polyprotein</name>
        <sequence type="external"/>
    </isoform>
    <text>Translation results in the formation of the Gag polyprotein most of the time. Ribosomal frameshifting at the gag-pol genes boundary occurs at low frequency and produces the Gag-Pol polyprotein. This strategy of translation probably allows the virus to modulate the quantity of each viral protein. Maintenance of a correct Gag to Gag-Pol ratio is essential for RNA dimerization and viral infectivity.</text>
</comment>
<comment type="domain">
    <molecule>Reverse transcriptase/ribonuclease H</molecule>
    <text evidence="1">RT is structured in five subdomains: finger, palm, thumb, connection and RNase H. Within the palm subdomain, the 'primer grip' region is thought to be involved in the positioning of the primer terminus for accommodating the incoming nucleotide. The RNase H domain stabilizes the association of RT with primer-template.</text>
</comment>
<comment type="domain">
    <molecule>Reverse transcriptase/ribonuclease H</molecule>
    <text evidence="1">The tryptophan repeat motif is involved in RT p66/p51 dimerization (By similarity).</text>
</comment>
<comment type="domain">
    <molecule>Integrase</molecule>
    <text evidence="1">The core domain contains the D-x(n)-D-x(35)-E motif, named for the phylogenetically conserved glutamic acid and aspartic acid residues and the invariant 35 amino acid spacing between the second and third acidic residues. Each acidic residue of the D,D(35)E motif is independently essential for the 3'-processing and strand transfer activities of purified integrase protein.</text>
</comment>
<comment type="PTM">
    <molecule>Gag-Pol polyprotein</molecule>
    <text evidence="5 11">Specific enzymatic cleavages by the viral protease yield mature proteins. The protease is released by autocatalytic cleavage. The polyprotein is cleaved during and after budding, this process is termed maturation. Proteolytic cleavage of p66 RT removes the RNase H domain to yield the p51 RT subunit. Nucleocapsid protein p7 might be further cleaved after virus entry.</text>
</comment>
<comment type="PTM">
    <molecule>Matrix protein p17</molecule>
    <text evidence="5">Tyrosine phosphorylated presumably in the virion by a host kinase. Phosphorylation is apparently not a major regulator of membrane association.</text>
</comment>
<comment type="PTM">
    <molecule>Capsid protein p24</molecule>
    <text evidence="6">Phosphorylated possibly by host MAPK1; this phosphorylation is necessary for Pin1-mediated virion uncoating.</text>
</comment>
<comment type="PTM">
    <molecule>Nucleocapsid protein p7</molecule>
    <text evidence="2">Methylated by host PRMT6, impairing its function by reducing RNA annealing and the initiation of reverse transcription.</text>
</comment>
<comment type="miscellaneous">
    <molecule>Reverse transcriptase/ribonuclease H</molecule>
    <text evidence="1">Error-prone enzyme that lacks a proof-reading function. High mutations rate is a direct consequence of this characteristic. RT also displays frequent template switching leading to high recombination rate. Recombination mostly occurs between homologous regions of the two copackaged RNA genomes. If these two RNA molecules derive from different viral strains, reverse transcription will give rise to highly recombinated proviral DNAs.</text>
</comment>
<comment type="miscellaneous">
    <text>HIV-1 lineages are divided in three main groups, M (for Major), O (for Outlier), and N (for New, or Non-M, Non-O). The vast majority of strains found worldwide belong to the group M. Group O seems to be endemic to and largely confined to Cameroon and neighboring countries in West Central Africa, where these viruses represent a small minority of HIV-1 strains. The group N is represented by a limited number of isolates from Cameroonian persons. The group M is further subdivided in 9 clades or subtypes (A to D, F to H, J and K).</text>
</comment>
<comment type="miscellaneous">
    <text>Resistance to inhibitors associated with mutations are observed both in viral protease and in reverse transcriptase. Most of the time, single mutations confer only a modest reduction in drug susceptibility. Combination of several mutations is usually required to develop a high-level drug resistance. These mutations are predominantly found in clade B viruses and not in other genotypes. They are listed in the clade B representative isolate HXB2 (AC P04585).</text>
</comment>
<comment type="miscellaneous">
    <molecule>Isoform Gag-Pol polyprotein</molecule>
    <text>Produced by -1 ribosomal frameshifting.</text>
</comment>
<comment type="online information" name="HIV drug resistance mutations">
    <link uri="https://www.iasusa.org/hiv-drug-resistance/hiv-drug-resistance-mutations/"/>
</comment>
<comment type="online information" name="hivdb">
    <link uri="https://hivdb.stanford.edu"/>
    <text>HIV drug resistance database</text>
</comment>
<proteinExistence type="inferred from homology"/>
<organism>
    <name type="scientific">Human immunodeficiency virus type 1 group M subtype J (isolate SE9280)</name>
    <name type="common">HIV-1</name>
    <dbReference type="NCBI Taxonomy" id="388905"/>
    <lineage>
        <taxon>Viruses</taxon>
        <taxon>Riboviria</taxon>
        <taxon>Pararnavirae</taxon>
        <taxon>Artverviricota</taxon>
        <taxon>Revtraviricetes</taxon>
        <taxon>Ortervirales</taxon>
        <taxon>Retroviridae</taxon>
        <taxon>Orthoretrovirinae</taxon>
        <taxon>Lentivirus</taxon>
        <taxon>Human immunodeficiency virus type 1</taxon>
    </lineage>
</organism>
<accession>Q9WC54</accession>
<evidence type="ECO:0000250" key="1"/>
<evidence type="ECO:0000250" key="2">
    <source>
        <dbReference type="UniProtKB" id="P03347"/>
    </source>
</evidence>
<evidence type="ECO:0000250" key="3">
    <source>
        <dbReference type="UniProtKB" id="P03366"/>
    </source>
</evidence>
<evidence type="ECO:0000250" key="4">
    <source>
        <dbReference type="UniProtKB" id="P03367"/>
    </source>
</evidence>
<evidence type="ECO:0000250" key="5">
    <source>
        <dbReference type="UniProtKB" id="P04585"/>
    </source>
</evidence>
<evidence type="ECO:0000250" key="6">
    <source>
        <dbReference type="UniProtKB" id="P12493"/>
    </source>
</evidence>
<evidence type="ECO:0000250" key="7">
    <source>
        <dbReference type="UniProtKB" id="P12497"/>
    </source>
</evidence>
<evidence type="ECO:0000255" key="8"/>
<evidence type="ECO:0000255" key="9">
    <source>
        <dbReference type="PROSITE-ProRule" id="PRU00047"/>
    </source>
</evidence>
<evidence type="ECO:0000255" key="10">
    <source>
        <dbReference type="PROSITE-ProRule" id="PRU00275"/>
    </source>
</evidence>
<evidence type="ECO:0000255" key="11">
    <source>
        <dbReference type="PROSITE-ProRule" id="PRU00405"/>
    </source>
</evidence>
<evidence type="ECO:0000255" key="12">
    <source>
        <dbReference type="PROSITE-ProRule" id="PRU00408"/>
    </source>
</evidence>
<evidence type="ECO:0000255" key="13">
    <source>
        <dbReference type="PROSITE-ProRule" id="PRU00450"/>
    </source>
</evidence>
<evidence type="ECO:0000255" key="14">
    <source>
        <dbReference type="PROSITE-ProRule" id="PRU00457"/>
    </source>
</evidence>
<evidence type="ECO:0000255" key="15">
    <source>
        <dbReference type="PROSITE-ProRule" id="PRU00506"/>
    </source>
</evidence>
<evidence type="ECO:0000255" key="16">
    <source>
        <dbReference type="PROSITE-ProRule" id="PRU10094"/>
    </source>
</evidence>
<evidence type="ECO:0000256" key="17">
    <source>
        <dbReference type="SAM" id="MobiDB-lite"/>
    </source>
</evidence>
<evidence type="ECO:0000305" key="18"/>
<reference key="1">
    <citation type="journal article" date="1999" name="AIDS Res. Hum. Retroviruses">
        <title>Virtually full-length sequences of HIV type 1 subtype J reference strains.</title>
        <authorList>
            <person name="Laukkanen T."/>
            <person name="Albert J."/>
            <person name="Liitsola K."/>
            <person name="Green S.D."/>
            <person name="Carr J.K."/>
            <person name="Leitner T."/>
            <person name="McCutchan F.E."/>
            <person name="Salminen M.O."/>
        </authorList>
    </citation>
    <scope>NUCLEOTIDE SEQUENCE [GENOMIC DNA]</scope>
</reference>
<organismHost>
    <name type="scientific">Homo sapiens</name>
    <name type="common">Human</name>
    <dbReference type="NCBI Taxonomy" id="9606"/>
</organismHost>
<protein>
    <recommendedName>
        <fullName>Gag-Pol polyprotein</fullName>
    </recommendedName>
    <alternativeName>
        <fullName>Pr160Gag-Pol</fullName>
    </alternativeName>
    <component>
        <recommendedName>
            <fullName>Matrix protein p17</fullName>
            <shortName>MA</shortName>
        </recommendedName>
    </component>
    <component>
        <recommendedName>
            <fullName>Capsid protein p24</fullName>
            <shortName>CA</shortName>
        </recommendedName>
    </component>
    <component>
        <recommendedName>
            <fullName evidence="7">Spacer peptide 1</fullName>
            <shortName>SP1</shortName>
        </recommendedName>
        <alternativeName>
            <fullName>p2</fullName>
        </alternativeName>
    </component>
    <component>
        <recommendedName>
            <fullName>Nucleocapsid protein p7</fullName>
            <shortName>NC</shortName>
        </recommendedName>
    </component>
    <component>
        <recommendedName>
            <fullName>Transframe peptide</fullName>
            <shortName>TF</shortName>
        </recommendedName>
    </component>
    <component>
        <recommendedName>
            <fullName>p6-pol</fullName>
            <shortName>p6*</shortName>
        </recommendedName>
    </component>
    <component>
        <recommendedName>
            <fullName>Protease</fullName>
            <ecNumber>3.4.23.16</ecNumber>
        </recommendedName>
        <alternativeName>
            <fullName>PR</fullName>
        </alternativeName>
        <alternativeName>
            <fullName>Retropepsin</fullName>
        </alternativeName>
    </component>
    <component>
        <recommendedName>
            <fullName>Reverse transcriptase/ribonuclease H</fullName>
            <ecNumber>2.7.7.49</ecNumber>
            <ecNumber>2.7.7.7</ecNumber>
            <ecNumber>3.1.26.13</ecNumber>
        </recommendedName>
        <alternativeName>
            <fullName>Exoribonuclease H</fullName>
            <ecNumber>3.1.13.2</ecNumber>
        </alternativeName>
        <alternativeName>
            <fullName>p66 RT</fullName>
        </alternativeName>
    </component>
    <component>
        <recommendedName>
            <fullName>p51 RT</fullName>
        </recommendedName>
    </component>
    <component>
        <recommendedName>
            <fullName>p15</fullName>
        </recommendedName>
    </component>
    <component>
        <recommendedName>
            <fullName>Integrase</fullName>
            <shortName>IN</shortName>
            <ecNumber evidence="5">2.7.7.-</ecNumber>
            <ecNumber evidence="5">3.1.-.-</ecNumber>
        </recommendedName>
    </component>
</protein>
<feature type="initiator methionine" description="Removed; by host" evidence="1">
    <location>
        <position position="1"/>
    </location>
</feature>
<feature type="chain" id="PRO_0000261281" description="Gag-Pol polyprotein">
    <location>
        <begin position="2"/>
        <end position="1432"/>
    </location>
</feature>
<feature type="chain" id="PRO_0000246556" description="Matrix protein p17" evidence="1">
    <location>
        <begin position="2"/>
        <end position="132"/>
    </location>
</feature>
<feature type="chain" id="PRO_0000246557" description="Capsid protein p24" evidence="1">
    <location>
        <begin position="133"/>
        <end position="363"/>
    </location>
</feature>
<feature type="peptide" id="PRO_0000246558" description="Spacer peptide 1" evidence="1">
    <location>
        <begin position="364"/>
        <end position="376"/>
    </location>
</feature>
<feature type="chain" id="PRO_0000246559" description="Nucleocapsid protein p7" evidence="1">
    <location>
        <begin position="377"/>
        <end position="431"/>
    </location>
</feature>
<feature type="peptide" id="PRO_0000246731" description="Transframe peptide" evidence="8">
    <location>
        <begin position="432"/>
        <end position="439"/>
    </location>
</feature>
<feature type="chain" id="PRO_0000246560" description="p6-pol" evidence="8">
    <location>
        <begin position="440"/>
        <end position="485"/>
    </location>
</feature>
<feature type="chain" id="PRO_0000246561" description="Protease" evidence="1">
    <location>
        <begin position="486"/>
        <end position="584"/>
    </location>
</feature>
<feature type="chain" id="PRO_0000246562" description="Reverse transcriptase/ribonuclease H" evidence="1">
    <location>
        <begin position="585"/>
        <end position="1144"/>
    </location>
</feature>
<feature type="chain" id="PRO_0000246563" description="p51 RT" evidence="1">
    <location>
        <begin position="585"/>
        <end position="1024"/>
    </location>
</feature>
<feature type="chain" id="PRO_0000246564" description="p15" evidence="1">
    <location>
        <begin position="1025"/>
        <end position="1144"/>
    </location>
</feature>
<feature type="chain" id="PRO_0000246565" description="Integrase" evidence="1">
    <location>
        <begin position="1145"/>
        <end position="1432"/>
    </location>
</feature>
<feature type="domain" description="Peptidase A2" evidence="10">
    <location>
        <begin position="505"/>
        <end position="574"/>
    </location>
</feature>
<feature type="domain" description="Reverse transcriptase" evidence="11">
    <location>
        <begin position="628"/>
        <end position="818"/>
    </location>
</feature>
<feature type="domain" description="RNase H type-1" evidence="12">
    <location>
        <begin position="1018"/>
        <end position="1141"/>
    </location>
</feature>
<feature type="domain" description="Integrase catalytic" evidence="14">
    <location>
        <begin position="1198"/>
        <end position="1348"/>
    </location>
</feature>
<feature type="zinc finger region" description="CCHC-type 1" evidence="9">
    <location>
        <begin position="389"/>
        <end position="406"/>
    </location>
</feature>
<feature type="zinc finger region" description="CCHC-type 2" evidence="9">
    <location>
        <begin position="410"/>
        <end position="427"/>
    </location>
</feature>
<feature type="zinc finger region" description="Integrase-type" evidence="13">
    <location>
        <begin position="1147"/>
        <end position="1188"/>
    </location>
</feature>
<feature type="DNA-binding region" description="Integrase-type" evidence="15">
    <location>
        <begin position="1367"/>
        <end position="1414"/>
    </location>
</feature>
<feature type="region of interest" description="Interaction with Gp41" evidence="7">
    <location>
        <begin position="7"/>
        <end position="31"/>
    </location>
</feature>
<feature type="region of interest" description="Interaction with host CALM1" evidence="5">
    <location>
        <begin position="8"/>
        <end position="43"/>
    </location>
</feature>
<feature type="region of interest" description="Interaction with host AP3D1" evidence="7">
    <location>
        <begin position="12"/>
        <end position="19"/>
    </location>
</feature>
<feature type="region of interest" description="Interaction with membrane phosphatidylinositol 4,5-bisphosphate and RNA" evidence="7">
    <location>
        <begin position="14"/>
        <end position="33"/>
    </location>
</feature>
<feature type="region of interest" description="Interaction with membrane phosphatidylinositol 4,5-bisphosphate" evidence="7">
    <location>
        <begin position="73"/>
        <end position="77"/>
    </location>
</feature>
<feature type="region of interest" description="Interaction with human PPIA/CYPA and NUP153" evidence="7">
    <location>
        <begin position="189"/>
        <end position="227"/>
    </location>
</feature>
<feature type="region of interest" description="Dimerization/Multimerization of capsid protein p24" evidence="5">
    <location>
        <begin position="277"/>
        <end position="363"/>
    </location>
</feature>
<feature type="region of interest" description="Disordered" evidence="17">
    <location>
        <begin position="443"/>
        <end position="483"/>
    </location>
</feature>
<feature type="region of interest" description="Dimerization of protease" evidence="5">
    <location>
        <begin position="486"/>
        <end position="490"/>
    </location>
</feature>
<feature type="region of interest" description="Dimerization of protease" evidence="5">
    <location>
        <begin position="534"/>
        <end position="540"/>
    </location>
</feature>
<feature type="region of interest" description="Dimerization of protease" evidence="5">
    <location>
        <begin position="573"/>
        <end position="585"/>
    </location>
</feature>
<feature type="region of interest" description="RT 'primer grip'" evidence="1">
    <location>
        <begin position="811"/>
        <end position="819"/>
    </location>
</feature>
<feature type="short sequence motif" description="Nuclear export signal" evidence="1">
    <location>
        <begin position="16"/>
        <end position="22"/>
    </location>
</feature>
<feature type="short sequence motif" description="Nuclear localization signal" evidence="1">
    <location>
        <begin position="26"/>
        <end position="32"/>
    </location>
</feature>
<feature type="short sequence motif" description="Tryptophan repeat motif" evidence="1">
    <location>
        <begin position="982"/>
        <end position="998"/>
    </location>
</feature>
<feature type="compositionally biased region" description="Polar residues" evidence="17">
    <location>
        <begin position="449"/>
        <end position="459"/>
    </location>
</feature>
<feature type="compositionally biased region" description="Basic and acidic residues" evidence="17">
    <location>
        <begin position="460"/>
        <end position="469"/>
    </location>
</feature>
<feature type="active site" description="For protease activity; shared with dimeric partner" evidence="16">
    <location>
        <position position="510"/>
    </location>
</feature>
<feature type="binding site" evidence="1">
    <location>
        <position position="694"/>
    </location>
    <ligand>
        <name>Mg(2+)</name>
        <dbReference type="ChEBI" id="CHEBI:18420"/>
        <label>1</label>
        <note>catalytic; for reverse transcriptase activity</note>
    </ligand>
</feature>
<feature type="binding site" evidence="1">
    <location>
        <position position="769"/>
    </location>
    <ligand>
        <name>Mg(2+)</name>
        <dbReference type="ChEBI" id="CHEBI:18420"/>
        <label>1</label>
        <note>catalytic; for reverse transcriptase activity</note>
    </ligand>
</feature>
<feature type="binding site" evidence="1">
    <location>
        <position position="770"/>
    </location>
    <ligand>
        <name>Mg(2+)</name>
        <dbReference type="ChEBI" id="CHEBI:18420"/>
        <label>1</label>
        <note>catalytic; for reverse transcriptase activity</note>
    </ligand>
</feature>
<feature type="binding site" evidence="1">
    <location>
        <position position="1027"/>
    </location>
    <ligand>
        <name>Mg(2+)</name>
        <dbReference type="ChEBI" id="CHEBI:18420"/>
        <label>2</label>
        <note>catalytic; for RNase H activity</note>
    </ligand>
</feature>
<feature type="binding site" evidence="1">
    <location>
        <position position="1062"/>
    </location>
    <ligand>
        <name>Mg(2+)</name>
        <dbReference type="ChEBI" id="CHEBI:18420"/>
        <label>2</label>
        <note>catalytic; for RNase H activity</note>
    </ligand>
</feature>
<feature type="binding site" evidence="1">
    <location>
        <position position="1082"/>
    </location>
    <ligand>
        <name>Mg(2+)</name>
        <dbReference type="ChEBI" id="CHEBI:18420"/>
        <label>2</label>
        <note>catalytic; for RNase H activity</note>
    </ligand>
</feature>
<feature type="binding site" evidence="1">
    <location>
        <position position="1133"/>
    </location>
    <ligand>
        <name>Mg(2+)</name>
        <dbReference type="ChEBI" id="CHEBI:18420"/>
        <label>2</label>
        <note>catalytic; for RNase H activity</note>
    </ligand>
</feature>
<feature type="binding site" evidence="13">
    <location>
        <position position="1156"/>
    </location>
    <ligand>
        <name>Zn(2+)</name>
        <dbReference type="ChEBI" id="CHEBI:29105"/>
    </ligand>
</feature>
<feature type="binding site" evidence="13">
    <location>
        <position position="1160"/>
    </location>
    <ligand>
        <name>Zn(2+)</name>
        <dbReference type="ChEBI" id="CHEBI:29105"/>
    </ligand>
</feature>
<feature type="binding site" evidence="13">
    <location>
        <position position="1184"/>
    </location>
    <ligand>
        <name>Zn(2+)</name>
        <dbReference type="ChEBI" id="CHEBI:29105"/>
    </ligand>
</feature>
<feature type="binding site" evidence="13">
    <location>
        <position position="1187"/>
    </location>
    <ligand>
        <name>Zn(2+)</name>
        <dbReference type="ChEBI" id="CHEBI:29105"/>
    </ligand>
</feature>
<feature type="binding site" evidence="1">
    <location>
        <position position="1208"/>
    </location>
    <ligand>
        <name>Mg(2+)</name>
        <dbReference type="ChEBI" id="CHEBI:18420"/>
        <label>3</label>
        <note>catalytic; for integrase activity</note>
    </ligand>
</feature>
<feature type="binding site" evidence="1">
    <location>
        <position position="1260"/>
    </location>
    <ligand>
        <name>Mg(2+)</name>
        <dbReference type="ChEBI" id="CHEBI:18420"/>
        <label>3</label>
        <note>catalytic; for integrase activity</note>
    </ligand>
</feature>
<feature type="binding site" evidence="5">
    <location>
        <position position="1296"/>
    </location>
    <ligand>
        <name>Mg(2+)</name>
        <dbReference type="ChEBI" id="CHEBI:18420"/>
        <label>3</label>
        <note>catalytic; for integrase activity</note>
    </ligand>
</feature>
<feature type="site" description="Cleavage; by viral protease" evidence="1">
    <location>
        <begin position="132"/>
        <end position="133"/>
    </location>
</feature>
<feature type="site" description="Cis/trans isomerization of proline peptide bond; by human PPIA/CYPA" evidence="1">
    <location>
        <begin position="221"/>
        <end position="222"/>
    </location>
</feature>
<feature type="site" description="Cleavage; by viral protease" evidence="1">
    <location>
        <begin position="363"/>
        <end position="364"/>
    </location>
</feature>
<feature type="site" description="Cleavage; by viral protease" evidence="1">
    <location>
        <begin position="376"/>
        <end position="377"/>
    </location>
</feature>
<feature type="site" description="Cleavage; by viral protease" evidence="8">
    <location>
        <begin position="431"/>
        <end position="432"/>
    </location>
</feature>
<feature type="site" description="Cleavage; by viral protease" evidence="1">
    <location>
        <begin position="439"/>
        <end position="440"/>
    </location>
</feature>
<feature type="site" description="Cleavage; by viral protease" evidence="1">
    <location>
        <begin position="485"/>
        <end position="486"/>
    </location>
</feature>
<feature type="site" description="Cleavage; by viral protease" evidence="1">
    <location>
        <begin position="584"/>
        <end position="585"/>
    </location>
</feature>
<feature type="site" description="Essential for RT p66/p51 heterodimerization" evidence="1">
    <location>
        <position position="985"/>
    </location>
</feature>
<feature type="site" description="Essential for RT p66/p51 heterodimerization" evidence="1">
    <location>
        <position position="998"/>
    </location>
</feature>
<feature type="site" description="Cleavage; by viral protease; partial" evidence="1">
    <location>
        <begin position="1024"/>
        <end position="1025"/>
    </location>
</feature>
<feature type="site" description="Cleavage; by viral protease" evidence="1">
    <location>
        <begin position="1144"/>
        <end position="1145"/>
    </location>
</feature>
<feature type="modified residue" description="Phosphotyrosine; by host" evidence="1">
    <location>
        <position position="132"/>
    </location>
</feature>
<feature type="lipid moiety-binding region" description="N-myristoyl glycine; by host" evidence="1">
    <location>
        <position position="2"/>
    </location>
</feature>
<sequence>MGARASILSGGKLDDWEKIRLRPGGKKKYRIKHLVWASRELDRFALNPGLLESAKGCQQILVQLQPALQTGTQEIKSLYNTVATLYCVHQRIEIKDTMEALEKIEEIQNKNKQQAQKAETDKKDNSQVSQNYPIVQNLQGQPVHQALSPRTLNAWVKVIEEKAFSPEVIPMFSALSEGATPQDLNTMLNTIGGHQAAMQMLKDTINEEAAEWDRVHPVHAGPIAPGQVREPRGSDIAGTTSTLQEQIGWMTGNPPIPVGEIYKRWIILGLNKIVRMYSPVSILDIRQGPKEPFRDYVDRFFKALRAEQATQDVKNWMTDTLLVQNANPDCKTILKALGSGATLEEMMTACQGVGGPGHKARVLAEAMSQVTNTNIMMQRGNFRDHKRIVKCFNCGKQGHIAKNCRAPRKKGCWKCGKEGHQMKDCTERQANFFREDLAFQQREARELSPEQTRANSPTSREPRARRGDPLPETGAEGQGTVSSNFPQITLWQRPLVTIRIGGQLREALLDTGADDTVLEDIDLPRKWKPKMIGGIGGFIKVRQYNEVPIEIEGKKAIGTVLIGPTPVNIIGRNMLTQLGCTLNFPISPIETVPVKLKPGMDGPKIKQWPLTEEKIKALTQICAEMEEEGKISRVGPENPYNTPVFAIKKKDSTKWRKLVDFRELNKRTQDFWEVQLGIPHPAGLKKKKSVTVLDVGDAYFSVPLYEDFRKYTAFTIPSINNETPGIRYQYNVLPQGWKGSPAIFQCSMTKILKPFRERNPEIVIYQYMDDLYVGSDLEIEQHRRKIKELREHLLKWGFTTPDKKHQKEPPFLWMGYELHPDKWTVQPIQLPEKEDWTVNDIQKLVGKLNWASQIYPGIKVKQLCKLLKGAKALTDIVPLTREAELELAENKEILKEPVHGVYYDSAKELIAEVQKQGLDQWTYQIYQEPFKNLKTGKYAKRRSAHTNDVKQLAEVVQKIALEAIVIWGKTPKFRLPIQRETWETWWTDYWQATWIPEWEFVNTPPLVKLWYQLEKEPIMGAETFYVDGASNRETKTGKAGYVTDKGRQKVVTLTDTTNQKTELHAIYLALRDSGLEVNIVTDSQYALGIIQAQPDKSESELVNQIIEELIKKEKVYLSWVPAHKGIGGNEQVDKLVSSGIRKVLFLDGIDKAQEDHEKYHSNWRAMASDFNLPPVVAKEIVASCDKCQLKGEAMHGQVDCSPGIWQLDCTHLEGKVILVAVHVASGYIEAEVIPAETGQEAAFFILKLAGRWPVKVIHTDNGSNFTSGAVKAACWWADIKQEFGIPYNPQSQGVVESMNKELKKIIGQVREQAEHLKTAVQMAVFIHNFKRKGGIGGYSAGERIIDIIATDIQTRELQKQITKIQNFRVYYRDSRDPIWKGPAKLPWKGEGAVVIQDNSEIKVVPRRKAKIIRDYGKQMAGDDCVAGRQDED</sequence>